<reference key="1">
    <citation type="journal article" date="2003" name="Nature">
        <title>The genome sequence of the filamentous fungus Neurospora crassa.</title>
        <authorList>
            <person name="Galagan J.E."/>
            <person name="Calvo S.E."/>
            <person name="Borkovich K.A."/>
            <person name="Selker E.U."/>
            <person name="Read N.D."/>
            <person name="Jaffe D.B."/>
            <person name="FitzHugh W."/>
            <person name="Ma L.-J."/>
            <person name="Smirnov S."/>
            <person name="Purcell S."/>
            <person name="Rehman B."/>
            <person name="Elkins T."/>
            <person name="Engels R."/>
            <person name="Wang S."/>
            <person name="Nielsen C.B."/>
            <person name="Butler J."/>
            <person name="Endrizzi M."/>
            <person name="Qui D."/>
            <person name="Ianakiev P."/>
            <person name="Bell-Pedersen D."/>
            <person name="Nelson M.A."/>
            <person name="Werner-Washburne M."/>
            <person name="Selitrennikoff C.P."/>
            <person name="Kinsey J.A."/>
            <person name="Braun E.L."/>
            <person name="Zelter A."/>
            <person name="Schulte U."/>
            <person name="Kothe G.O."/>
            <person name="Jedd G."/>
            <person name="Mewes H.-W."/>
            <person name="Staben C."/>
            <person name="Marcotte E."/>
            <person name="Greenberg D."/>
            <person name="Roy A."/>
            <person name="Foley K."/>
            <person name="Naylor J."/>
            <person name="Stange-Thomann N."/>
            <person name="Barrett R."/>
            <person name="Gnerre S."/>
            <person name="Kamal M."/>
            <person name="Kamvysselis M."/>
            <person name="Mauceli E.W."/>
            <person name="Bielke C."/>
            <person name="Rudd S."/>
            <person name="Frishman D."/>
            <person name="Krystofova S."/>
            <person name="Rasmussen C."/>
            <person name="Metzenberg R.L."/>
            <person name="Perkins D.D."/>
            <person name="Kroken S."/>
            <person name="Cogoni C."/>
            <person name="Macino G."/>
            <person name="Catcheside D.E.A."/>
            <person name="Li W."/>
            <person name="Pratt R.J."/>
            <person name="Osmani S.A."/>
            <person name="DeSouza C.P.C."/>
            <person name="Glass N.L."/>
            <person name="Orbach M.J."/>
            <person name="Berglund J.A."/>
            <person name="Voelker R."/>
            <person name="Yarden O."/>
            <person name="Plamann M."/>
            <person name="Seiler S."/>
            <person name="Dunlap J.C."/>
            <person name="Radford A."/>
            <person name="Aramayo R."/>
            <person name="Natvig D.O."/>
            <person name="Alex L.A."/>
            <person name="Mannhaupt G."/>
            <person name="Ebbole D.J."/>
            <person name="Freitag M."/>
            <person name="Paulsen I."/>
            <person name="Sachs M.S."/>
            <person name="Lander E.S."/>
            <person name="Nusbaum C."/>
            <person name="Birren B.W."/>
        </authorList>
    </citation>
    <scope>NUCLEOTIDE SEQUENCE [LARGE SCALE GENOMIC DNA]</scope>
    <source>
        <strain>ATCC 24698 / 74-OR23-1A / CBS 708.71 / DSM 1257 / FGSC 987</strain>
    </source>
</reference>
<reference key="2">
    <citation type="journal article" date="1994" name="Microbiology">
        <title>The Neurospora crassa chs-2 gene encodes a non-essential chitin synthase.</title>
        <authorList>
            <person name="Din A.B."/>
            <person name="Yarden O."/>
        </authorList>
    </citation>
    <scope>NUCLEOTIDE SEQUENCE [GENOMIC DNA] OF 77-1097</scope>
</reference>
<reference key="3">
    <citation type="journal article" date="1992" name="Proc. Natl. Acad. Sci. U.S.A.">
        <title>Classification of fungal chitin synthases.</title>
        <authorList>
            <person name="Bowen A.R."/>
            <person name="Chen-Wu J.L.-P."/>
            <person name="Momany M."/>
            <person name="Young R."/>
            <person name="Szaniszlo P.J."/>
            <person name="Robbins P.W."/>
        </authorList>
    </citation>
    <scope>NUCLEOTIDE SEQUENCE [GENOMIC DNA] OF 403-591</scope>
</reference>
<evidence type="ECO:0000255" key="1"/>
<evidence type="ECO:0000256" key="2">
    <source>
        <dbReference type="SAM" id="MobiDB-lite"/>
    </source>
</evidence>
<evidence type="ECO:0000305" key="3"/>
<dbReference type="EC" id="2.4.1.16"/>
<dbReference type="EMBL" id="CM002239">
    <property type="protein sequence ID" value="EAA32767.3"/>
    <property type="molecule type" value="Genomic_DNA"/>
</dbReference>
<dbReference type="EMBL" id="X77782">
    <property type="protein sequence ID" value="CAA54816.1"/>
    <property type="status" value="ALT_FRAME"/>
    <property type="molecule type" value="Genomic_DNA"/>
</dbReference>
<dbReference type="EMBL" id="M82951">
    <property type="protein sequence ID" value="AAA33582.1"/>
    <property type="molecule type" value="Genomic_DNA"/>
</dbReference>
<dbReference type="PIR" id="B45189">
    <property type="entry name" value="B45189"/>
</dbReference>
<dbReference type="PIR" id="T47246">
    <property type="entry name" value="T47246"/>
</dbReference>
<dbReference type="RefSeq" id="XP_962003.3">
    <property type="nucleotide sequence ID" value="XM_956910.3"/>
</dbReference>
<dbReference type="SMR" id="P30589"/>
<dbReference type="FunCoup" id="P30589">
    <property type="interactions" value="68"/>
</dbReference>
<dbReference type="STRING" id="367110.P30589"/>
<dbReference type="CAZy" id="GT2">
    <property type="family name" value="Glycosyltransferase Family 2"/>
</dbReference>
<dbReference type="GlyCosmos" id="P30589">
    <property type="glycosylation" value="3 sites, No reported glycans"/>
</dbReference>
<dbReference type="EnsemblFungi" id="EAA32767">
    <property type="protein sequence ID" value="EAA32767"/>
    <property type="gene ID" value="NCU05239"/>
</dbReference>
<dbReference type="GeneID" id="3878151"/>
<dbReference type="KEGG" id="ncr:NCU05239"/>
<dbReference type="VEuPathDB" id="FungiDB:NCU05239"/>
<dbReference type="HOGENOM" id="CLU_004760_1_0_1"/>
<dbReference type="InParanoid" id="P30589"/>
<dbReference type="OrthoDB" id="26569at2759"/>
<dbReference type="BRENDA" id="2.4.1.16">
    <property type="organism ID" value="3627"/>
</dbReference>
<dbReference type="Proteomes" id="UP000001805">
    <property type="component" value="Chromosome 4, Linkage Group IV"/>
</dbReference>
<dbReference type="GO" id="GO:0071944">
    <property type="term" value="C:cell periphery"/>
    <property type="evidence" value="ECO:0000318"/>
    <property type="project" value="GO_Central"/>
</dbReference>
<dbReference type="GO" id="GO:0030428">
    <property type="term" value="C:cell septum"/>
    <property type="evidence" value="ECO:0000318"/>
    <property type="project" value="GO_Central"/>
</dbReference>
<dbReference type="GO" id="GO:0005935">
    <property type="term" value="C:cellular bud neck"/>
    <property type="evidence" value="ECO:0007669"/>
    <property type="project" value="EnsemblFungi"/>
</dbReference>
<dbReference type="GO" id="GO:0005886">
    <property type="term" value="C:plasma membrane"/>
    <property type="evidence" value="ECO:0007669"/>
    <property type="project" value="UniProtKB-SubCell"/>
</dbReference>
<dbReference type="GO" id="GO:0004100">
    <property type="term" value="F:chitin synthase activity"/>
    <property type="evidence" value="ECO:0000318"/>
    <property type="project" value="GO_Central"/>
</dbReference>
<dbReference type="GO" id="GO:0071555">
    <property type="term" value="P:cell wall organization"/>
    <property type="evidence" value="ECO:0007669"/>
    <property type="project" value="UniProtKB-KW"/>
</dbReference>
<dbReference type="GO" id="GO:0006031">
    <property type="term" value="P:chitin biosynthetic process"/>
    <property type="evidence" value="ECO:0000318"/>
    <property type="project" value="GO_Central"/>
</dbReference>
<dbReference type="GO" id="GO:1902404">
    <property type="term" value="P:mitotic actomyosin contractile ring contraction"/>
    <property type="evidence" value="ECO:0007669"/>
    <property type="project" value="EnsemblFungi"/>
</dbReference>
<dbReference type="CDD" id="cd04190">
    <property type="entry name" value="Chitin_synth_C"/>
    <property type="match status" value="1"/>
</dbReference>
<dbReference type="InterPro" id="IPR004835">
    <property type="entry name" value="Chitin_synth"/>
</dbReference>
<dbReference type="InterPro" id="IPR004834">
    <property type="entry name" value="Chitin_synth_fun"/>
</dbReference>
<dbReference type="InterPro" id="IPR013616">
    <property type="entry name" value="Chitin_synth_N"/>
</dbReference>
<dbReference type="PANTHER" id="PTHR22914">
    <property type="entry name" value="CHITIN SYNTHASE"/>
    <property type="match status" value="1"/>
</dbReference>
<dbReference type="PANTHER" id="PTHR22914:SF38">
    <property type="entry name" value="CHITIN SYNTHASE 2"/>
    <property type="match status" value="1"/>
</dbReference>
<dbReference type="Pfam" id="PF01644">
    <property type="entry name" value="Chitin_synth_1"/>
    <property type="match status" value="1"/>
</dbReference>
<dbReference type="Pfam" id="PF08407">
    <property type="entry name" value="Chitin_synth_1N"/>
    <property type="match status" value="1"/>
</dbReference>
<protein>
    <recommendedName>
        <fullName>Chitin synthase 2</fullName>
        <ecNumber>2.4.1.16</ecNumber>
    </recommendedName>
    <alternativeName>
        <fullName>Chitin-UDP acetyl-glucosaminyl transferase 2</fullName>
    </alternativeName>
</protein>
<sequence length="1097" mass="123135">MAGYGHSTAGGFGSGSGSGPPGPQYMLPQYDEGDDPDADATPAGQGVRLLTNLDNSSYISVSEITSQSSHRDNIRPSRLRQAYEPSIDARTYEPSLDTRTYEPSISDRRHMYEPSIDERSSYMDPPRIPPPDGGSYVSSYMGTESMVSGHGRPWSPESATGYRVPPQGRYEPSEIDGHARPGTPGSSYGNARRPLPSAPAPLHYNSPSRAASHYPRYHGGYADDVTVSMGPDDDRTDIFGPETDLSETRHLNDAYGFRSSQITLSEDPHGTHARSRYDDEDDVSTTYSSNTGTSASGVDKFEHYGPIPEEGKHERRGVRPPQMSRKEVQLINGELVLECKIPTILYSFLPRRDEVEFTHMRYTAVTCDPDDFVARGYKLRQNIGRTARETELFICVTMYNEDEFGFTRTMHAVMKNISHFCSRNKSRTWGADGWQKIVVCVVSDGREIIHPRTLDALAAMGVYQHGIAKNFVNQKAVQAHVYEYTTQVSLDSDLKFKGAEKGIVPCQMIFCLKEKNQKKLNSHRWFFNAFGKALNPNVCILLDVGTRPGGTSLYHLWKAFDTDSNVAGACGEIKAMKGRFGGNLLNPLVASQNFEYKMSNILDKPLESVFGYITVLPGALSAYRYHALQNDETGHGPLSQYFKGETLHGQHADVFTANMYLAEDRILCWELVAKRGERWVLKYVKGCTGETDVPDTVPEFVSQRRRWLNGAFFAAVYSLVHFRQIWKTDHTFMRKALLHVEFLYHLLQLLFTYFSLANFYLAFYFIAGGLADPHVDPFNSDGHVARIIFNILRYVCVLLICTQFILSLGNRPQGAKRMYLASMIIYAVIMVYTTFATIFIVVRQIQPSQKSDDKPDLELGNNVFTNLIVSVASTLGLYFVMSFLYLDPWHMFTSAIQYFVLLPSYICTLQIYAFCNTHDVTWGTKGDNVMRTDLGGAIGKGSTVELEMPSDQLDIDSGYDECLRNLRDRVMVPAVPVSEDQLQQDYYKSVRTYMVVSWMVANATLAMAVSEAYGDSEIGDNFYLRFILWAVAALALFRALGSTTFAAINLVSALVEGRVRLRLNMKGFRWIKEKWGDADVKGKFEGLGDRARGLARR</sequence>
<feature type="chain" id="PRO_0000193702" description="Chitin synthase 2">
    <location>
        <begin position="1"/>
        <end position="1097"/>
    </location>
</feature>
<feature type="topological domain" description="Extracellular" evidence="1">
    <location>
        <begin position="1"/>
        <end position="748"/>
    </location>
</feature>
<feature type="transmembrane region" description="Helical" evidence="1">
    <location>
        <begin position="749"/>
        <end position="769"/>
    </location>
</feature>
<feature type="topological domain" description="Cytoplasmic" evidence="1">
    <location>
        <begin position="770"/>
        <end position="786"/>
    </location>
</feature>
<feature type="transmembrane region" description="Helical" evidence="1">
    <location>
        <begin position="787"/>
        <end position="807"/>
    </location>
</feature>
<feature type="topological domain" description="Extracellular" evidence="1">
    <location>
        <begin position="808"/>
        <end position="821"/>
    </location>
</feature>
<feature type="transmembrane region" description="Helical" evidence="1">
    <location>
        <begin position="822"/>
        <end position="842"/>
    </location>
</feature>
<feature type="topological domain" description="Cytoplasmic" evidence="1">
    <location>
        <begin position="843"/>
        <end position="865"/>
    </location>
</feature>
<feature type="transmembrane region" description="Helical" evidence="1">
    <location>
        <begin position="866"/>
        <end position="886"/>
    </location>
</feature>
<feature type="topological domain" description="Extracellular" evidence="1">
    <location>
        <begin position="887"/>
        <end position="894"/>
    </location>
</feature>
<feature type="transmembrane region" description="Helical" evidence="1">
    <location>
        <begin position="895"/>
        <end position="915"/>
    </location>
</feature>
<feature type="topological domain" description="Cytoplasmic" evidence="1">
    <location>
        <begin position="916"/>
        <end position="993"/>
    </location>
</feature>
<feature type="transmembrane region" description="Helical" evidence="1">
    <location>
        <begin position="994"/>
        <end position="1014"/>
    </location>
</feature>
<feature type="topological domain" description="Extracellular" evidence="1">
    <location>
        <begin position="1015"/>
        <end position="1025"/>
    </location>
</feature>
<feature type="transmembrane region" description="Helical" evidence="1">
    <location>
        <begin position="1026"/>
        <end position="1046"/>
    </location>
</feature>
<feature type="topological domain" description="Cytoplasmic" evidence="1">
    <location>
        <begin position="1047"/>
        <end position="1097"/>
    </location>
</feature>
<feature type="region of interest" description="Disordered" evidence="2">
    <location>
        <begin position="1"/>
        <end position="46"/>
    </location>
</feature>
<feature type="region of interest" description="Disordered" evidence="2">
    <location>
        <begin position="148"/>
        <end position="217"/>
    </location>
</feature>
<feature type="region of interest" description="Disordered" evidence="2">
    <location>
        <begin position="259"/>
        <end position="322"/>
    </location>
</feature>
<feature type="compositionally biased region" description="Gly residues" evidence="2">
    <location>
        <begin position="8"/>
        <end position="19"/>
    </location>
</feature>
<feature type="compositionally biased region" description="Polar residues" evidence="2">
    <location>
        <begin position="284"/>
        <end position="296"/>
    </location>
</feature>
<feature type="compositionally biased region" description="Basic and acidic residues" evidence="2">
    <location>
        <begin position="299"/>
        <end position="313"/>
    </location>
</feature>
<feature type="glycosylation site" description="N-linked (GlcNAc...) asparagine" evidence="1">
    <location>
        <position position="55"/>
    </location>
</feature>
<feature type="glycosylation site" description="N-linked (GlcNAc...) asparagine" evidence="1">
    <location>
        <position position="416"/>
    </location>
</feature>
<feature type="glycosylation site" description="N-linked (GlcNAc...) asparagine" evidence="1">
    <location>
        <position position="424"/>
    </location>
</feature>
<feature type="sequence conflict" description="In Ref. 2; CAA54816 and 3; AAA33582." evidence="3" ref="2 3">
    <original>K</original>
    <variation>M</variation>
    <location>
        <position position="495"/>
    </location>
</feature>
<feature type="sequence conflict" description="In Ref. 2; CAA54816." evidence="3" ref="2">
    <original>G</original>
    <variation>V</variation>
    <location>
        <position position="939"/>
    </location>
</feature>
<feature type="sequence conflict" description="In Ref. 2; CAA54816." evidence="3" ref="2">
    <original>AVPV</original>
    <variation>CRSL</variation>
    <location>
        <begin position="974"/>
        <end position="977"/>
    </location>
</feature>
<feature type="sequence conflict" description="In Ref. 2; CAA54816." evidence="3" ref="2">
    <original>R</original>
    <variation>K</variation>
    <location>
        <position position="1096"/>
    </location>
</feature>
<keyword id="KW-1003">Cell membrane</keyword>
<keyword id="KW-0961">Cell wall biogenesis/degradation</keyword>
<keyword id="KW-0325">Glycoprotein</keyword>
<keyword id="KW-0328">Glycosyltransferase</keyword>
<keyword id="KW-0472">Membrane</keyword>
<keyword id="KW-1185">Reference proteome</keyword>
<keyword id="KW-0808">Transferase</keyword>
<keyword id="KW-0812">Transmembrane</keyword>
<keyword id="KW-1133">Transmembrane helix</keyword>
<name>CHS2_NEUCR</name>
<gene>
    <name type="primary">chs-2</name>
    <name type="ORF">NCU05239</name>
</gene>
<organism>
    <name type="scientific">Neurospora crassa (strain ATCC 24698 / 74-OR23-1A / CBS 708.71 / DSM 1257 / FGSC 987)</name>
    <dbReference type="NCBI Taxonomy" id="367110"/>
    <lineage>
        <taxon>Eukaryota</taxon>
        <taxon>Fungi</taxon>
        <taxon>Dikarya</taxon>
        <taxon>Ascomycota</taxon>
        <taxon>Pezizomycotina</taxon>
        <taxon>Sordariomycetes</taxon>
        <taxon>Sordariomycetidae</taxon>
        <taxon>Sordariales</taxon>
        <taxon>Sordariaceae</taxon>
        <taxon>Neurospora</taxon>
    </lineage>
</organism>
<proteinExistence type="inferred from homology"/>
<comment type="function">
    <text evidence="3">Polymerizes chitin, a structural polymer of the cell wall and septum, by transferring the sugar moiety of UDP-GlcNAc to the non-reducing end of the growing chitin polymer.</text>
</comment>
<comment type="catalytic activity">
    <reaction>
        <text>[(1-&gt;4)-N-acetyl-beta-D-glucosaminyl](n) + UDP-N-acetyl-alpha-D-glucosamine = [(1-&gt;4)-N-acetyl-beta-D-glucosaminyl](n+1) + UDP + H(+)</text>
        <dbReference type="Rhea" id="RHEA:16637"/>
        <dbReference type="Rhea" id="RHEA-COMP:9593"/>
        <dbReference type="Rhea" id="RHEA-COMP:9595"/>
        <dbReference type="ChEBI" id="CHEBI:15378"/>
        <dbReference type="ChEBI" id="CHEBI:17029"/>
        <dbReference type="ChEBI" id="CHEBI:57705"/>
        <dbReference type="ChEBI" id="CHEBI:58223"/>
        <dbReference type="EC" id="2.4.1.16"/>
    </reaction>
</comment>
<comment type="subcellular location">
    <subcellularLocation>
        <location evidence="3">Cell membrane</location>
        <topology evidence="1">Multi-pass membrane protein</topology>
    </subcellularLocation>
</comment>
<comment type="similarity">
    <text evidence="3">Belongs to the chitin synthase family.</text>
</comment>
<comment type="sequence caution" evidence="3">
    <conflict type="frameshift">
        <sequence resource="EMBL-CDS" id="CAA54816"/>
    </conflict>
</comment>
<accession>P30589</accession>
<accession>Q7RVF4</accession>